<feature type="peptide" id="PRO_0000378881" description="Sulfakinin-1" evidence="3">
    <location>
        <begin position="1"/>
        <end position="11"/>
    </location>
</feature>
<feature type="modified residue" description="Sulfotyrosine" evidence="1">
    <location>
        <position position="6"/>
    </location>
</feature>
<feature type="modified residue" description="Phenylalanine amide" evidence="3">
    <location>
        <position position="11"/>
    </location>
</feature>
<name>SK1_GYNLU</name>
<proteinExistence type="evidence at protein level"/>
<protein>
    <recommendedName>
        <fullName evidence="4">Sulfakinin-1</fullName>
        <shortName evidence="4">GynLu-SK-1</shortName>
    </recommendedName>
</protein>
<sequence length="11" mass="1459">EQFEDYGHMRF</sequence>
<dbReference type="GO" id="GO:0005576">
    <property type="term" value="C:extracellular region"/>
    <property type="evidence" value="ECO:0007669"/>
    <property type="project" value="UniProtKB-SubCell"/>
</dbReference>
<dbReference type="GO" id="GO:0005179">
    <property type="term" value="F:hormone activity"/>
    <property type="evidence" value="ECO:0007669"/>
    <property type="project" value="UniProtKB-KW"/>
</dbReference>
<dbReference type="GO" id="GO:0007218">
    <property type="term" value="P:neuropeptide signaling pathway"/>
    <property type="evidence" value="ECO:0007669"/>
    <property type="project" value="UniProtKB-KW"/>
</dbReference>
<dbReference type="InterPro" id="IPR013152">
    <property type="entry name" value="Gastrin/cholecystokinin_CS"/>
</dbReference>
<dbReference type="InterPro" id="IPR013259">
    <property type="entry name" value="Sulfakinin"/>
</dbReference>
<dbReference type="Pfam" id="PF08257">
    <property type="entry name" value="Sulfakinin"/>
    <property type="match status" value="1"/>
</dbReference>
<dbReference type="PROSITE" id="PS00259">
    <property type="entry name" value="GASTRIN"/>
    <property type="match status" value="1"/>
</dbReference>
<reference evidence="5" key="1">
    <citation type="journal article" date="2009" name="BMC Evol. Biol.">
        <title>A proteomic approach for studying insect phylogeny: CAPA peptides of ancient insect taxa (Dictyoptera, Blattoptera) as a test case.</title>
        <authorList>
            <person name="Roth S."/>
            <person name="Fromm B."/>
            <person name="Gaede G."/>
            <person name="Predel R."/>
        </authorList>
    </citation>
    <scope>PROTEIN SEQUENCE</scope>
    <scope>AMIDATION AT PHE-11</scope>
    <source>
        <tissue evidence="3">Corpora cardiaca</tissue>
    </source>
</reference>
<evidence type="ECO:0000250" key="1">
    <source>
        <dbReference type="UniProtKB" id="P41493"/>
    </source>
</evidence>
<evidence type="ECO:0000255" key="2"/>
<evidence type="ECO:0000269" key="3">
    <source>
    </source>
</evidence>
<evidence type="ECO:0000303" key="4">
    <source>
    </source>
</evidence>
<evidence type="ECO:0000305" key="5"/>
<comment type="function">
    <text evidence="1">Myotropic peptide.</text>
</comment>
<comment type="subcellular location">
    <subcellularLocation>
        <location evidence="5">Secreted</location>
    </subcellularLocation>
</comment>
<comment type="similarity">
    <text evidence="2">Belongs to the gastrin/cholecystokinin family.</text>
</comment>
<organism>
    <name type="scientific">Gyna lurida</name>
    <name type="common">Porcelain cockroach</name>
    <dbReference type="NCBI Taxonomy" id="406578"/>
    <lineage>
        <taxon>Eukaryota</taxon>
        <taxon>Metazoa</taxon>
        <taxon>Ecdysozoa</taxon>
        <taxon>Arthropoda</taxon>
        <taxon>Hexapoda</taxon>
        <taxon>Insecta</taxon>
        <taxon>Pterygota</taxon>
        <taxon>Neoptera</taxon>
        <taxon>Polyneoptera</taxon>
        <taxon>Dictyoptera</taxon>
        <taxon>Blattodea</taxon>
        <taxon>Blaberoidea</taxon>
        <taxon>Blaberidae</taxon>
        <taxon>Gyninae</taxon>
        <taxon>Gyna</taxon>
    </lineage>
</organism>
<keyword id="KW-0027">Amidation</keyword>
<keyword id="KW-0903">Direct protein sequencing</keyword>
<keyword id="KW-0372">Hormone</keyword>
<keyword id="KW-0527">Neuropeptide</keyword>
<keyword id="KW-0964">Secreted</keyword>
<keyword id="KW-0765">Sulfation</keyword>
<accession>P85652</accession>